<reference key="1">
    <citation type="journal article" date="2001" name="Nature">
        <title>Genome sequence of enterohaemorrhagic Escherichia coli O157:H7.</title>
        <authorList>
            <person name="Perna N.T."/>
            <person name="Plunkett G. III"/>
            <person name="Burland V."/>
            <person name="Mau B."/>
            <person name="Glasner J.D."/>
            <person name="Rose D.J."/>
            <person name="Mayhew G.F."/>
            <person name="Evans P.S."/>
            <person name="Gregor J."/>
            <person name="Kirkpatrick H.A."/>
            <person name="Posfai G."/>
            <person name="Hackett J."/>
            <person name="Klink S."/>
            <person name="Boutin A."/>
            <person name="Shao Y."/>
            <person name="Miller L."/>
            <person name="Grotbeck E.J."/>
            <person name="Davis N.W."/>
            <person name="Lim A."/>
            <person name="Dimalanta E.T."/>
            <person name="Potamousis K."/>
            <person name="Apodaca J."/>
            <person name="Anantharaman T.S."/>
            <person name="Lin J."/>
            <person name="Yen G."/>
            <person name="Schwartz D.C."/>
            <person name="Welch R.A."/>
            <person name="Blattner F.R."/>
        </authorList>
    </citation>
    <scope>NUCLEOTIDE SEQUENCE [LARGE SCALE GENOMIC DNA]</scope>
    <source>
        <strain>O157:H7 / EDL933 / ATCC 700927 / EHEC</strain>
    </source>
</reference>
<reference key="2">
    <citation type="journal article" date="2001" name="DNA Res.">
        <title>Complete genome sequence of enterohemorrhagic Escherichia coli O157:H7 and genomic comparison with a laboratory strain K-12.</title>
        <authorList>
            <person name="Hayashi T."/>
            <person name="Makino K."/>
            <person name="Ohnishi M."/>
            <person name="Kurokawa K."/>
            <person name="Ishii K."/>
            <person name="Yokoyama K."/>
            <person name="Han C.-G."/>
            <person name="Ohtsubo E."/>
            <person name="Nakayama K."/>
            <person name="Murata T."/>
            <person name="Tanaka M."/>
            <person name="Tobe T."/>
            <person name="Iida T."/>
            <person name="Takami H."/>
            <person name="Honda T."/>
            <person name="Sasakawa C."/>
            <person name="Ogasawara N."/>
            <person name="Yasunaga T."/>
            <person name="Kuhara S."/>
            <person name="Shiba T."/>
            <person name="Hattori M."/>
            <person name="Shinagawa H."/>
        </authorList>
    </citation>
    <scope>NUCLEOTIDE SEQUENCE [LARGE SCALE GENOMIC DNA]</scope>
    <source>
        <strain>O157:H7 / Sakai / RIMD 0509952 / EHEC</strain>
    </source>
</reference>
<organism>
    <name type="scientific">Escherichia coli O157:H7</name>
    <dbReference type="NCBI Taxonomy" id="83334"/>
    <lineage>
        <taxon>Bacteria</taxon>
        <taxon>Pseudomonadati</taxon>
        <taxon>Pseudomonadota</taxon>
        <taxon>Gammaproteobacteria</taxon>
        <taxon>Enterobacterales</taxon>
        <taxon>Enterobacteriaceae</taxon>
        <taxon>Escherichia</taxon>
    </lineage>
</organism>
<gene>
    <name evidence="2" type="primary">rpmD</name>
    <name type="ordered locus">Z4672</name>
    <name type="ordered locus">ECs4167</name>
</gene>
<comment type="subunit">
    <text>Part of the 50S ribosomal subunit.</text>
</comment>
<comment type="miscellaneous">
    <text evidence="1">This protein is located near the guanosine triphosphatase center of the 50S subunit.</text>
</comment>
<comment type="similarity">
    <text evidence="2">Belongs to the universal ribosomal protein uL30 family.</text>
</comment>
<proteinExistence type="inferred from homology"/>
<feature type="initiator methionine" description="Removed" evidence="1">
    <location>
        <position position="1"/>
    </location>
</feature>
<feature type="chain" id="PRO_0000104591" description="Large ribosomal subunit protein uL30">
    <location>
        <begin position="2"/>
        <end position="59"/>
    </location>
</feature>
<name>RL30_ECO57</name>
<keyword id="KW-1185">Reference proteome</keyword>
<keyword id="KW-0687">Ribonucleoprotein</keyword>
<keyword id="KW-0689">Ribosomal protein</keyword>
<evidence type="ECO:0000250" key="1"/>
<evidence type="ECO:0000255" key="2">
    <source>
        <dbReference type="HAMAP-Rule" id="MF_01371"/>
    </source>
</evidence>
<evidence type="ECO:0000305" key="3"/>
<accession>P0AG53</accession>
<accession>P02430</accession>
<sequence length="59" mass="6542">MAKTIKITQTRSAIGRLPKHKATLLGLGLRRIGHTVEREDTPAIRGMINAVSFMVKVEE</sequence>
<protein>
    <recommendedName>
        <fullName evidence="2">Large ribosomal subunit protein uL30</fullName>
    </recommendedName>
    <alternativeName>
        <fullName evidence="3">50S ribosomal protein L30</fullName>
    </alternativeName>
</protein>
<dbReference type="EMBL" id="AE005174">
    <property type="protein sequence ID" value="AAG58423.1"/>
    <property type="molecule type" value="Genomic_DNA"/>
</dbReference>
<dbReference type="EMBL" id="BA000007">
    <property type="protein sequence ID" value="BAB37590.1"/>
    <property type="molecule type" value="Genomic_DNA"/>
</dbReference>
<dbReference type="PIR" id="C85995">
    <property type="entry name" value="C85995"/>
</dbReference>
<dbReference type="PIR" id="G91149">
    <property type="entry name" value="G91149"/>
</dbReference>
<dbReference type="RefSeq" id="NP_312194.1">
    <property type="nucleotide sequence ID" value="NC_002695.1"/>
</dbReference>
<dbReference type="RefSeq" id="WP_001140433.1">
    <property type="nucleotide sequence ID" value="NZ_VOAI01000041.1"/>
</dbReference>
<dbReference type="SMR" id="P0AG53"/>
<dbReference type="STRING" id="155864.Z4672"/>
<dbReference type="GeneID" id="915946"/>
<dbReference type="GeneID" id="93778685"/>
<dbReference type="KEGG" id="ece:Z4672"/>
<dbReference type="KEGG" id="ecs:ECs_4167"/>
<dbReference type="PATRIC" id="fig|386585.9.peg.4350"/>
<dbReference type="eggNOG" id="COG1841">
    <property type="taxonomic scope" value="Bacteria"/>
</dbReference>
<dbReference type="HOGENOM" id="CLU_131047_1_4_6"/>
<dbReference type="OMA" id="KMHKTRE"/>
<dbReference type="Proteomes" id="UP000000558">
    <property type="component" value="Chromosome"/>
</dbReference>
<dbReference type="Proteomes" id="UP000002519">
    <property type="component" value="Chromosome"/>
</dbReference>
<dbReference type="GO" id="GO:0022625">
    <property type="term" value="C:cytosolic large ribosomal subunit"/>
    <property type="evidence" value="ECO:0007669"/>
    <property type="project" value="TreeGrafter"/>
</dbReference>
<dbReference type="GO" id="GO:0003735">
    <property type="term" value="F:structural constituent of ribosome"/>
    <property type="evidence" value="ECO:0007669"/>
    <property type="project" value="InterPro"/>
</dbReference>
<dbReference type="GO" id="GO:0006412">
    <property type="term" value="P:translation"/>
    <property type="evidence" value="ECO:0007669"/>
    <property type="project" value="UniProtKB-UniRule"/>
</dbReference>
<dbReference type="CDD" id="cd01658">
    <property type="entry name" value="Ribosomal_L30"/>
    <property type="match status" value="1"/>
</dbReference>
<dbReference type="FunFam" id="3.30.1390.20:FF:000001">
    <property type="entry name" value="50S ribosomal protein L30"/>
    <property type="match status" value="1"/>
</dbReference>
<dbReference type="Gene3D" id="3.30.1390.20">
    <property type="entry name" value="Ribosomal protein L30, ferredoxin-like fold domain"/>
    <property type="match status" value="1"/>
</dbReference>
<dbReference type="HAMAP" id="MF_01371_B">
    <property type="entry name" value="Ribosomal_uL30_B"/>
    <property type="match status" value="1"/>
</dbReference>
<dbReference type="InterPro" id="IPR036919">
    <property type="entry name" value="Ribo_uL30_ferredoxin-like_sf"/>
</dbReference>
<dbReference type="InterPro" id="IPR005996">
    <property type="entry name" value="Ribosomal_uL30_bac-type"/>
</dbReference>
<dbReference type="InterPro" id="IPR018038">
    <property type="entry name" value="Ribosomal_uL30_CS"/>
</dbReference>
<dbReference type="InterPro" id="IPR016082">
    <property type="entry name" value="Ribosomal_uL30_ferredoxin-like"/>
</dbReference>
<dbReference type="NCBIfam" id="TIGR01308">
    <property type="entry name" value="rpmD_bact"/>
    <property type="match status" value="1"/>
</dbReference>
<dbReference type="PANTHER" id="PTHR15892:SF2">
    <property type="entry name" value="LARGE RIBOSOMAL SUBUNIT PROTEIN UL30M"/>
    <property type="match status" value="1"/>
</dbReference>
<dbReference type="PANTHER" id="PTHR15892">
    <property type="entry name" value="MITOCHONDRIAL RIBOSOMAL PROTEIN L30"/>
    <property type="match status" value="1"/>
</dbReference>
<dbReference type="Pfam" id="PF00327">
    <property type="entry name" value="Ribosomal_L30"/>
    <property type="match status" value="1"/>
</dbReference>
<dbReference type="PIRSF" id="PIRSF002211">
    <property type="entry name" value="Ribosomal_L30_bac-type"/>
    <property type="match status" value="1"/>
</dbReference>
<dbReference type="SUPFAM" id="SSF55129">
    <property type="entry name" value="Ribosomal protein L30p/L7e"/>
    <property type="match status" value="1"/>
</dbReference>
<dbReference type="PROSITE" id="PS00634">
    <property type="entry name" value="RIBOSOMAL_L30"/>
    <property type="match status" value="1"/>
</dbReference>